<dbReference type="EMBL" id="AM286280">
    <property type="protein sequence ID" value="CAL08355.1"/>
    <property type="molecule type" value="Genomic_DNA"/>
</dbReference>
<dbReference type="RefSeq" id="WP_003017806.1">
    <property type="nucleotide sequence ID" value="NC_008245.1"/>
</dbReference>
<dbReference type="SMR" id="Q14JA6"/>
<dbReference type="KEGG" id="ftf:FTF0339"/>
<dbReference type="HOGENOM" id="CLU_098428_0_0_6"/>
<dbReference type="GO" id="GO:1990904">
    <property type="term" value="C:ribonucleoprotein complex"/>
    <property type="evidence" value="ECO:0007669"/>
    <property type="project" value="UniProtKB-KW"/>
</dbReference>
<dbReference type="GO" id="GO:0005840">
    <property type="term" value="C:ribosome"/>
    <property type="evidence" value="ECO:0007669"/>
    <property type="project" value="UniProtKB-KW"/>
</dbReference>
<dbReference type="GO" id="GO:0019843">
    <property type="term" value="F:rRNA binding"/>
    <property type="evidence" value="ECO:0007669"/>
    <property type="project" value="UniProtKB-UniRule"/>
</dbReference>
<dbReference type="GO" id="GO:0003735">
    <property type="term" value="F:structural constituent of ribosome"/>
    <property type="evidence" value="ECO:0007669"/>
    <property type="project" value="InterPro"/>
</dbReference>
<dbReference type="GO" id="GO:0006412">
    <property type="term" value="P:translation"/>
    <property type="evidence" value="ECO:0007669"/>
    <property type="project" value="UniProtKB-UniRule"/>
</dbReference>
<dbReference type="FunFam" id="3.30.1490.10:FF:000001">
    <property type="entry name" value="30S ribosomal protein S8"/>
    <property type="match status" value="1"/>
</dbReference>
<dbReference type="Gene3D" id="3.30.1370.30">
    <property type="match status" value="1"/>
</dbReference>
<dbReference type="Gene3D" id="3.30.1490.10">
    <property type="match status" value="1"/>
</dbReference>
<dbReference type="HAMAP" id="MF_01302_B">
    <property type="entry name" value="Ribosomal_uS8_B"/>
    <property type="match status" value="1"/>
</dbReference>
<dbReference type="InterPro" id="IPR000630">
    <property type="entry name" value="Ribosomal_uS8"/>
</dbReference>
<dbReference type="InterPro" id="IPR047863">
    <property type="entry name" value="Ribosomal_uS8_CS"/>
</dbReference>
<dbReference type="InterPro" id="IPR035987">
    <property type="entry name" value="Ribosomal_uS8_sf"/>
</dbReference>
<dbReference type="NCBIfam" id="NF001109">
    <property type="entry name" value="PRK00136.1"/>
    <property type="match status" value="1"/>
</dbReference>
<dbReference type="PANTHER" id="PTHR11758">
    <property type="entry name" value="40S RIBOSOMAL PROTEIN S15A"/>
    <property type="match status" value="1"/>
</dbReference>
<dbReference type="Pfam" id="PF00410">
    <property type="entry name" value="Ribosomal_S8"/>
    <property type="match status" value="1"/>
</dbReference>
<dbReference type="SUPFAM" id="SSF56047">
    <property type="entry name" value="Ribosomal protein S8"/>
    <property type="match status" value="1"/>
</dbReference>
<dbReference type="PROSITE" id="PS00053">
    <property type="entry name" value="RIBOSOMAL_S8"/>
    <property type="match status" value="1"/>
</dbReference>
<reference key="1">
    <citation type="journal article" date="2007" name="PLoS ONE">
        <title>Genome sequencing shows that European isolates of Francisella tularensis subspecies tularensis are almost identical to US laboratory strain Schu S4.</title>
        <authorList>
            <person name="Chaudhuri R.R."/>
            <person name="Ren C.-P."/>
            <person name="Desmond L."/>
            <person name="Vincent G.A."/>
            <person name="Silman N.J."/>
            <person name="Brehm J.K."/>
            <person name="Elmore M.J."/>
            <person name="Hudson M.J."/>
            <person name="Forsman M."/>
            <person name="Isherwood K.E."/>
            <person name="Gurycova D."/>
            <person name="Minton N.P."/>
            <person name="Titball R.W."/>
            <person name="Pallen M.J."/>
            <person name="Vipond R."/>
        </authorList>
    </citation>
    <scope>NUCLEOTIDE SEQUENCE [LARGE SCALE GENOMIC DNA]</scope>
    <source>
        <strain>FSC 198</strain>
    </source>
</reference>
<comment type="function">
    <text evidence="1">One of the primary rRNA binding proteins, it binds directly to 16S rRNA central domain where it helps coordinate assembly of the platform of the 30S subunit.</text>
</comment>
<comment type="subunit">
    <text evidence="1">Part of the 30S ribosomal subunit. Contacts proteins S5 and S12.</text>
</comment>
<comment type="similarity">
    <text evidence="1">Belongs to the universal ribosomal protein uS8 family.</text>
</comment>
<organism>
    <name type="scientific">Francisella tularensis subsp. tularensis (strain FSC 198)</name>
    <dbReference type="NCBI Taxonomy" id="393115"/>
    <lineage>
        <taxon>Bacteria</taxon>
        <taxon>Pseudomonadati</taxon>
        <taxon>Pseudomonadota</taxon>
        <taxon>Gammaproteobacteria</taxon>
        <taxon>Thiotrichales</taxon>
        <taxon>Francisellaceae</taxon>
        <taxon>Francisella</taxon>
    </lineage>
</organism>
<proteinExistence type="inferred from homology"/>
<evidence type="ECO:0000255" key="1">
    <source>
        <dbReference type="HAMAP-Rule" id="MF_01302"/>
    </source>
</evidence>
<evidence type="ECO:0000305" key="2"/>
<keyword id="KW-0687">Ribonucleoprotein</keyword>
<keyword id="KW-0689">Ribosomal protein</keyword>
<keyword id="KW-0694">RNA-binding</keyword>
<keyword id="KW-0699">rRNA-binding</keyword>
<protein>
    <recommendedName>
        <fullName evidence="1">Small ribosomal subunit protein uS8</fullName>
    </recommendedName>
    <alternativeName>
        <fullName evidence="2">30S ribosomal protein S8</fullName>
    </alternativeName>
</protein>
<sequence>MSMQDPIADMFTRIRNGLSAEKEFVSVPFSKIKMEIANFLVNEGYIKSCSKGTTSMGHPSIEVELKYHAGAPVIEMIKRVSRPSLRIYKSHADLPKVYGGYGVAIVSTSKGLVSDRKARDLGVGGEIIGYVA</sequence>
<accession>Q14JA6</accession>
<name>RS8_FRAT1</name>
<feature type="chain" id="PRO_0000290841" description="Small ribosomal subunit protein uS8">
    <location>
        <begin position="1"/>
        <end position="132"/>
    </location>
</feature>
<gene>
    <name evidence="1" type="primary">rpsH</name>
    <name type="ordered locus">FTF0339</name>
</gene>